<protein>
    <recommendedName>
        <fullName evidence="1">Glycine cleavage system H protein</fullName>
    </recommendedName>
</protein>
<keyword id="KW-0450">Lipoyl</keyword>
<keyword id="KW-1185">Reference proteome</keyword>
<sequence>MARDPSTLRYAETHEWVDVQEEGGDKFATIGISAFAVEQLNDLVYMDLPEVGRTLEVGEEFGEVESVKAVSPLYSPVAGEVVAVHTDLPDNLDNLNDDAFDFGWILKVKLSADLPETLMDFAAYQKQCSEAG</sequence>
<gene>
    <name evidence="1" type="primary">gcvH</name>
    <name type="ordered locus">RB7586</name>
</gene>
<reference key="1">
    <citation type="journal article" date="2003" name="Proc. Natl. Acad. Sci. U.S.A.">
        <title>Complete genome sequence of the marine planctomycete Pirellula sp. strain 1.</title>
        <authorList>
            <person name="Gloeckner F.O."/>
            <person name="Kube M."/>
            <person name="Bauer M."/>
            <person name="Teeling H."/>
            <person name="Lombardot T."/>
            <person name="Ludwig W."/>
            <person name="Gade D."/>
            <person name="Beck A."/>
            <person name="Borzym K."/>
            <person name="Heitmann K."/>
            <person name="Rabus R."/>
            <person name="Schlesner H."/>
            <person name="Amann R."/>
            <person name="Reinhardt R."/>
        </authorList>
    </citation>
    <scope>NUCLEOTIDE SEQUENCE [LARGE SCALE GENOMIC DNA]</scope>
    <source>
        <strain>DSM 10527 / NCIMB 13988 / SH1</strain>
    </source>
</reference>
<dbReference type="EMBL" id="BX294146">
    <property type="protein sequence ID" value="CAD75450.1"/>
    <property type="molecule type" value="Genomic_DNA"/>
</dbReference>
<dbReference type="RefSeq" id="NP_867903.1">
    <property type="nucleotide sequence ID" value="NC_005027.1"/>
</dbReference>
<dbReference type="RefSeq" id="WP_011121467.1">
    <property type="nucleotide sequence ID" value="NC_005027.1"/>
</dbReference>
<dbReference type="SMR" id="Q7UNG9"/>
<dbReference type="FunCoup" id="Q7UNG9">
    <property type="interactions" value="518"/>
</dbReference>
<dbReference type="STRING" id="243090.RB7586"/>
<dbReference type="EnsemblBacteria" id="CAD75450">
    <property type="protein sequence ID" value="CAD75450"/>
    <property type="gene ID" value="RB7586"/>
</dbReference>
<dbReference type="KEGG" id="rba:RB7586"/>
<dbReference type="PATRIC" id="fig|243090.15.peg.3666"/>
<dbReference type="eggNOG" id="COG0509">
    <property type="taxonomic scope" value="Bacteria"/>
</dbReference>
<dbReference type="HOGENOM" id="CLU_097408_2_0_0"/>
<dbReference type="InParanoid" id="Q7UNG9"/>
<dbReference type="OrthoDB" id="9796712at2"/>
<dbReference type="Proteomes" id="UP000001025">
    <property type="component" value="Chromosome"/>
</dbReference>
<dbReference type="GO" id="GO:0005829">
    <property type="term" value="C:cytosol"/>
    <property type="evidence" value="ECO:0000318"/>
    <property type="project" value="GO_Central"/>
</dbReference>
<dbReference type="GO" id="GO:0005960">
    <property type="term" value="C:glycine cleavage complex"/>
    <property type="evidence" value="ECO:0007669"/>
    <property type="project" value="InterPro"/>
</dbReference>
<dbReference type="GO" id="GO:0019464">
    <property type="term" value="P:glycine decarboxylation via glycine cleavage system"/>
    <property type="evidence" value="ECO:0007669"/>
    <property type="project" value="UniProtKB-UniRule"/>
</dbReference>
<dbReference type="CDD" id="cd06848">
    <property type="entry name" value="GCS_H"/>
    <property type="match status" value="1"/>
</dbReference>
<dbReference type="Gene3D" id="2.40.50.100">
    <property type="match status" value="1"/>
</dbReference>
<dbReference type="HAMAP" id="MF_00272">
    <property type="entry name" value="GcvH"/>
    <property type="match status" value="1"/>
</dbReference>
<dbReference type="InterPro" id="IPR003016">
    <property type="entry name" value="2-oxoA_DH_lipoyl-BS"/>
</dbReference>
<dbReference type="InterPro" id="IPR000089">
    <property type="entry name" value="Biotin_lipoyl"/>
</dbReference>
<dbReference type="InterPro" id="IPR002930">
    <property type="entry name" value="GCV_H"/>
</dbReference>
<dbReference type="InterPro" id="IPR033753">
    <property type="entry name" value="GCV_H/Fam206"/>
</dbReference>
<dbReference type="InterPro" id="IPR017453">
    <property type="entry name" value="GCV_H_sub"/>
</dbReference>
<dbReference type="InterPro" id="IPR011053">
    <property type="entry name" value="Single_hybrid_motif"/>
</dbReference>
<dbReference type="NCBIfam" id="TIGR00527">
    <property type="entry name" value="gcvH"/>
    <property type="match status" value="1"/>
</dbReference>
<dbReference type="NCBIfam" id="NF002270">
    <property type="entry name" value="PRK01202.1"/>
    <property type="match status" value="1"/>
</dbReference>
<dbReference type="PANTHER" id="PTHR11715">
    <property type="entry name" value="GLYCINE CLEAVAGE SYSTEM H PROTEIN"/>
    <property type="match status" value="1"/>
</dbReference>
<dbReference type="PANTHER" id="PTHR11715:SF3">
    <property type="entry name" value="GLYCINE CLEAVAGE SYSTEM H PROTEIN-RELATED"/>
    <property type="match status" value="1"/>
</dbReference>
<dbReference type="Pfam" id="PF01597">
    <property type="entry name" value="GCV_H"/>
    <property type="match status" value="1"/>
</dbReference>
<dbReference type="SUPFAM" id="SSF51230">
    <property type="entry name" value="Single hybrid motif"/>
    <property type="match status" value="1"/>
</dbReference>
<dbReference type="PROSITE" id="PS50968">
    <property type="entry name" value="BIOTINYL_LIPOYL"/>
    <property type="match status" value="1"/>
</dbReference>
<dbReference type="PROSITE" id="PS00189">
    <property type="entry name" value="LIPOYL"/>
    <property type="match status" value="1"/>
</dbReference>
<feature type="chain" id="PRO_0000226041" description="Glycine cleavage system H protein">
    <location>
        <begin position="1"/>
        <end position="132"/>
    </location>
</feature>
<feature type="domain" description="Lipoyl-binding" evidence="2">
    <location>
        <begin position="27"/>
        <end position="109"/>
    </location>
</feature>
<feature type="modified residue" description="N6-lipoyllysine" evidence="1">
    <location>
        <position position="68"/>
    </location>
</feature>
<proteinExistence type="inferred from homology"/>
<organism>
    <name type="scientific">Rhodopirellula baltica (strain DSM 10527 / NCIMB 13988 / SH1)</name>
    <dbReference type="NCBI Taxonomy" id="243090"/>
    <lineage>
        <taxon>Bacteria</taxon>
        <taxon>Pseudomonadati</taxon>
        <taxon>Planctomycetota</taxon>
        <taxon>Planctomycetia</taxon>
        <taxon>Pirellulales</taxon>
        <taxon>Pirellulaceae</taxon>
        <taxon>Rhodopirellula</taxon>
    </lineage>
</organism>
<comment type="function">
    <text evidence="1">The glycine cleavage system catalyzes the degradation of glycine. The H protein shuttles the methylamine group of glycine from the P protein to the T protein.</text>
</comment>
<comment type="cofactor">
    <cofactor evidence="1">
        <name>(R)-lipoate</name>
        <dbReference type="ChEBI" id="CHEBI:83088"/>
    </cofactor>
    <text evidence="1">Binds 1 lipoyl cofactor covalently.</text>
</comment>
<comment type="subunit">
    <text evidence="1">The glycine cleavage system is composed of four proteins: P, T, L and H.</text>
</comment>
<comment type="similarity">
    <text evidence="1">Belongs to the GcvH family.</text>
</comment>
<evidence type="ECO:0000255" key="1">
    <source>
        <dbReference type="HAMAP-Rule" id="MF_00272"/>
    </source>
</evidence>
<evidence type="ECO:0000255" key="2">
    <source>
        <dbReference type="PROSITE-ProRule" id="PRU01066"/>
    </source>
</evidence>
<name>GCSH_RHOBA</name>
<accession>Q7UNG9</accession>